<feature type="chain" id="PRO_0000296558" description="Large ribosomal subunit protein bL32">
    <location>
        <begin position="1"/>
        <end position="56"/>
    </location>
</feature>
<feature type="region of interest" description="Disordered" evidence="2">
    <location>
        <begin position="1"/>
        <end position="26"/>
    </location>
</feature>
<feature type="compositionally biased region" description="Basic residues" evidence="2">
    <location>
        <begin position="7"/>
        <end position="16"/>
    </location>
</feature>
<accession>A1S733</accession>
<name>RL32_SHEAM</name>
<protein>
    <recommendedName>
        <fullName evidence="1">Large ribosomal subunit protein bL32</fullName>
    </recommendedName>
    <alternativeName>
        <fullName evidence="3">50S ribosomal protein L32</fullName>
    </alternativeName>
</protein>
<comment type="similarity">
    <text evidence="1">Belongs to the bacterial ribosomal protein bL32 family.</text>
</comment>
<dbReference type="EMBL" id="CP000507">
    <property type="protein sequence ID" value="ABM00190.1"/>
    <property type="molecule type" value="Genomic_DNA"/>
</dbReference>
<dbReference type="RefSeq" id="WP_011760097.1">
    <property type="nucleotide sequence ID" value="NC_008700.1"/>
</dbReference>
<dbReference type="SMR" id="A1S733"/>
<dbReference type="STRING" id="326297.Sama_1984"/>
<dbReference type="KEGG" id="saz:Sama_1984"/>
<dbReference type="eggNOG" id="COG0333">
    <property type="taxonomic scope" value="Bacteria"/>
</dbReference>
<dbReference type="HOGENOM" id="CLU_129084_2_1_6"/>
<dbReference type="OrthoDB" id="9801927at2"/>
<dbReference type="Proteomes" id="UP000009175">
    <property type="component" value="Chromosome"/>
</dbReference>
<dbReference type="GO" id="GO:0015934">
    <property type="term" value="C:large ribosomal subunit"/>
    <property type="evidence" value="ECO:0007669"/>
    <property type="project" value="InterPro"/>
</dbReference>
<dbReference type="GO" id="GO:0003735">
    <property type="term" value="F:structural constituent of ribosome"/>
    <property type="evidence" value="ECO:0007669"/>
    <property type="project" value="InterPro"/>
</dbReference>
<dbReference type="GO" id="GO:0006412">
    <property type="term" value="P:translation"/>
    <property type="evidence" value="ECO:0007669"/>
    <property type="project" value="UniProtKB-UniRule"/>
</dbReference>
<dbReference type="HAMAP" id="MF_00340">
    <property type="entry name" value="Ribosomal_bL32"/>
    <property type="match status" value="1"/>
</dbReference>
<dbReference type="InterPro" id="IPR002677">
    <property type="entry name" value="Ribosomal_bL32"/>
</dbReference>
<dbReference type="InterPro" id="IPR044957">
    <property type="entry name" value="Ribosomal_bL32_bact"/>
</dbReference>
<dbReference type="InterPro" id="IPR011332">
    <property type="entry name" value="Ribosomal_zn-bd"/>
</dbReference>
<dbReference type="NCBIfam" id="TIGR01031">
    <property type="entry name" value="rpmF_bact"/>
    <property type="match status" value="1"/>
</dbReference>
<dbReference type="PANTHER" id="PTHR35534">
    <property type="entry name" value="50S RIBOSOMAL PROTEIN L32"/>
    <property type="match status" value="1"/>
</dbReference>
<dbReference type="PANTHER" id="PTHR35534:SF1">
    <property type="entry name" value="LARGE RIBOSOMAL SUBUNIT PROTEIN BL32"/>
    <property type="match status" value="1"/>
</dbReference>
<dbReference type="Pfam" id="PF01783">
    <property type="entry name" value="Ribosomal_L32p"/>
    <property type="match status" value="1"/>
</dbReference>
<dbReference type="SUPFAM" id="SSF57829">
    <property type="entry name" value="Zn-binding ribosomal proteins"/>
    <property type="match status" value="1"/>
</dbReference>
<evidence type="ECO:0000255" key="1">
    <source>
        <dbReference type="HAMAP-Rule" id="MF_00340"/>
    </source>
</evidence>
<evidence type="ECO:0000256" key="2">
    <source>
        <dbReference type="SAM" id="MobiDB-lite"/>
    </source>
</evidence>
<evidence type="ECO:0000305" key="3"/>
<gene>
    <name evidence="1" type="primary">rpmF</name>
    <name type="ordered locus">Sama_1984</name>
</gene>
<organism>
    <name type="scientific">Shewanella amazonensis (strain ATCC BAA-1098 / SB2B)</name>
    <dbReference type="NCBI Taxonomy" id="326297"/>
    <lineage>
        <taxon>Bacteria</taxon>
        <taxon>Pseudomonadati</taxon>
        <taxon>Pseudomonadota</taxon>
        <taxon>Gammaproteobacteria</taxon>
        <taxon>Alteromonadales</taxon>
        <taxon>Shewanellaceae</taxon>
        <taxon>Shewanella</taxon>
    </lineage>
</organism>
<reference key="1">
    <citation type="submission" date="2006-12" db="EMBL/GenBank/DDBJ databases">
        <title>Complete sequence of Shewanella amazonensis SB2B.</title>
        <authorList>
            <consortium name="US DOE Joint Genome Institute"/>
            <person name="Copeland A."/>
            <person name="Lucas S."/>
            <person name="Lapidus A."/>
            <person name="Barry K."/>
            <person name="Detter J.C."/>
            <person name="Glavina del Rio T."/>
            <person name="Hammon N."/>
            <person name="Israni S."/>
            <person name="Dalin E."/>
            <person name="Tice H."/>
            <person name="Pitluck S."/>
            <person name="Munk A.C."/>
            <person name="Brettin T."/>
            <person name="Bruce D."/>
            <person name="Han C."/>
            <person name="Tapia R."/>
            <person name="Gilna P."/>
            <person name="Schmutz J."/>
            <person name="Larimer F."/>
            <person name="Land M."/>
            <person name="Hauser L."/>
            <person name="Kyrpides N."/>
            <person name="Mikhailova N."/>
            <person name="Fredrickson J."/>
            <person name="Richardson P."/>
        </authorList>
    </citation>
    <scope>NUCLEOTIDE SEQUENCE [LARGE SCALE GENOMIC DNA]</scope>
    <source>
        <strain>ATCC BAA-1098 / SB2B</strain>
    </source>
</reference>
<sequence>MAVQQNKKSRSKRGMRRSHDALSTAQLSVDATSGELHLRHNVTADGYYRGKKVINK</sequence>
<keyword id="KW-1185">Reference proteome</keyword>
<keyword id="KW-0687">Ribonucleoprotein</keyword>
<keyword id="KW-0689">Ribosomal protein</keyword>
<proteinExistence type="inferred from homology"/>